<accession>Q2UKS9</accession>
<organism>
    <name type="scientific">Aspergillus oryzae (strain ATCC 42149 / RIB 40)</name>
    <name type="common">Yellow koji mold</name>
    <dbReference type="NCBI Taxonomy" id="510516"/>
    <lineage>
        <taxon>Eukaryota</taxon>
        <taxon>Fungi</taxon>
        <taxon>Dikarya</taxon>
        <taxon>Ascomycota</taxon>
        <taxon>Pezizomycotina</taxon>
        <taxon>Eurotiomycetes</taxon>
        <taxon>Eurotiomycetidae</taxon>
        <taxon>Eurotiales</taxon>
        <taxon>Aspergillaceae</taxon>
        <taxon>Aspergillus</taxon>
        <taxon>Aspergillus subgen. Circumdati</taxon>
    </lineage>
</organism>
<sequence length="451" mass="51591">MAANVPPSAETLLSGAAAHPPKTAEEIANQYDLLPKLIPFLDRHLVFPLLEFSSGQDDDKEIVRAKYELLKHTNMTDYVANLWQEINNSDTIPDEFVKKREEVLAKLQHYQEESAKITELLQDEDVVGNLRSDKVANLKFLEEQHGVTPEMVNSLFDYGRFQYSCGSYGNAAELLYQFRVLSTDNDKVASATWGKLASEILTTSWEAAMEEVQKAKESIETRLFNNPLGQLQNRSWLIHWSLFPFFNYDPARDVLTDLFFSPAYINTIQTHCPWILRYLAAAVITNRGRAHKSSSLYQKQLKDLIRVVRQEGYEYSDPITDFVKALYIDFDFEEAQKKLGEAEDVLRSDFFLVSAADAFVEAARHLISESYCKIHQRIDIKDLSTRLGLNQDEGEKWIVNLIRDTRVDAKIDYKEGTVIMNHPPQSVYQQVIEKTKGAFFRTQVLSAAVAK</sequence>
<reference key="1">
    <citation type="journal article" date="2005" name="Nature">
        <title>Genome sequencing and analysis of Aspergillus oryzae.</title>
        <authorList>
            <person name="Machida M."/>
            <person name="Asai K."/>
            <person name="Sano M."/>
            <person name="Tanaka T."/>
            <person name="Kumagai T."/>
            <person name="Terai G."/>
            <person name="Kusumoto K."/>
            <person name="Arima T."/>
            <person name="Akita O."/>
            <person name="Kashiwagi Y."/>
            <person name="Abe K."/>
            <person name="Gomi K."/>
            <person name="Horiuchi H."/>
            <person name="Kitamoto K."/>
            <person name="Kobayashi T."/>
            <person name="Takeuchi M."/>
            <person name="Denning D.W."/>
            <person name="Galagan J.E."/>
            <person name="Nierman W.C."/>
            <person name="Yu J."/>
            <person name="Archer D.B."/>
            <person name="Bennett J.W."/>
            <person name="Bhatnagar D."/>
            <person name="Cleveland T.E."/>
            <person name="Fedorova N.D."/>
            <person name="Gotoh O."/>
            <person name="Horikawa H."/>
            <person name="Hosoyama A."/>
            <person name="Ichinomiya M."/>
            <person name="Igarashi R."/>
            <person name="Iwashita K."/>
            <person name="Juvvadi P.R."/>
            <person name="Kato M."/>
            <person name="Kato Y."/>
            <person name="Kin T."/>
            <person name="Kokubun A."/>
            <person name="Maeda H."/>
            <person name="Maeyama N."/>
            <person name="Maruyama J."/>
            <person name="Nagasaki H."/>
            <person name="Nakajima T."/>
            <person name="Oda K."/>
            <person name="Okada K."/>
            <person name="Paulsen I."/>
            <person name="Sakamoto K."/>
            <person name="Sawano T."/>
            <person name="Takahashi M."/>
            <person name="Takase K."/>
            <person name="Terabayashi Y."/>
            <person name="Wortman J.R."/>
            <person name="Yamada O."/>
            <person name="Yamagata Y."/>
            <person name="Anazawa H."/>
            <person name="Hata Y."/>
            <person name="Koide Y."/>
            <person name="Komori T."/>
            <person name="Koyama Y."/>
            <person name="Minetoki T."/>
            <person name="Suharnan S."/>
            <person name="Tanaka A."/>
            <person name="Isono K."/>
            <person name="Kuhara S."/>
            <person name="Ogasawara N."/>
            <person name="Kikuchi H."/>
        </authorList>
    </citation>
    <scope>NUCLEOTIDE SEQUENCE [LARGE SCALE GENOMIC DNA]</scope>
    <source>
        <strain>ATCC 42149 / RIB 40</strain>
    </source>
</reference>
<keyword id="KW-0963">Cytoplasm</keyword>
<keyword id="KW-0396">Initiation factor</keyword>
<keyword id="KW-0648">Protein biosynthesis</keyword>
<keyword id="KW-1185">Reference proteome</keyword>
<gene>
    <name type="primary">int6</name>
    <name type="ORF">AO090003000689</name>
</gene>
<evidence type="ECO:0000255" key="1">
    <source>
        <dbReference type="HAMAP-Rule" id="MF_03004"/>
    </source>
</evidence>
<evidence type="ECO:0000255" key="2">
    <source>
        <dbReference type="PROSITE-ProRule" id="PRU01185"/>
    </source>
</evidence>
<dbReference type="EMBL" id="BA000050">
    <property type="protein sequence ID" value="BAE57836.1"/>
    <property type="molecule type" value="Genomic_DNA"/>
</dbReference>
<dbReference type="RefSeq" id="XP_001819838.1">
    <property type="nucleotide sequence ID" value="XM_001819786.2"/>
</dbReference>
<dbReference type="SMR" id="Q2UKS9"/>
<dbReference type="STRING" id="510516.Q2UKS9"/>
<dbReference type="EnsemblFungi" id="BAE57836">
    <property type="protein sequence ID" value="BAE57836"/>
    <property type="gene ID" value="AO090003000689"/>
</dbReference>
<dbReference type="GeneID" id="5991821"/>
<dbReference type="KEGG" id="aor:AO090003000689"/>
<dbReference type="VEuPathDB" id="FungiDB:AO090003000689"/>
<dbReference type="HOGENOM" id="CLU_031132_0_0_1"/>
<dbReference type="OMA" id="NCPWILR"/>
<dbReference type="OrthoDB" id="11476at5052"/>
<dbReference type="Proteomes" id="UP000006564">
    <property type="component" value="Chromosome 2"/>
</dbReference>
<dbReference type="GO" id="GO:0016282">
    <property type="term" value="C:eukaryotic 43S preinitiation complex"/>
    <property type="evidence" value="ECO:0007669"/>
    <property type="project" value="UniProtKB-UniRule"/>
</dbReference>
<dbReference type="GO" id="GO:0033290">
    <property type="term" value="C:eukaryotic 48S preinitiation complex"/>
    <property type="evidence" value="ECO:0007669"/>
    <property type="project" value="UniProtKB-UniRule"/>
</dbReference>
<dbReference type="GO" id="GO:0071540">
    <property type="term" value="C:eukaryotic translation initiation factor 3 complex, eIF3e"/>
    <property type="evidence" value="ECO:0007669"/>
    <property type="project" value="UniProtKB-UniRule"/>
</dbReference>
<dbReference type="GO" id="GO:0003743">
    <property type="term" value="F:translation initiation factor activity"/>
    <property type="evidence" value="ECO:0007669"/>
    <property type="project" value="UniProtKB-UniRule"/>
</dbReference>
<dbReference type="GO" id="GO:0001732">
    <property type="term" value="P:formation of cytoplasmic translation initiation complex"/>
    <property type="evidence" value="ECO:0007669"/>
    <property type="project" value="UniProtKB-UniRule"/>
</dbReference>
<dbReference type="CDD" id="cd21378">
    <property type="entry name" value="eIF3E"/>
    <property type="match status" value="1"/>
</dbReference>
<dbReference type="HAMAP" id="MF_03004">
    <property type="entry name" value="eIF3e"/>
    <property type="match status" value="1"/>
</dbReference>
<dbReference type="InterPro" id="IPR016650">
    <property type="entry name" value="eIF3e"/>
</dbReference>
<dbReference type="InterPro" id="IPR019010">
    <property type="entry name" value="eIF3e_N"/>
</dbReference>
<dbReference type="InterPro" id="IPR000717">
    <property type="entry name" value="PCI_dom"/>
</dbReference>
<dbReference type="InterPro" id="IPR036390">
    <property type="entry name" value="WH_DNA-bd_sf"/>
</dbReference>
<dbReference type="PANTHER" id="PTHR10317">
    <property type="entry name" value="EUKARYOTIC TRANSLATION INITIATION FACTOR 3 SUBUNIT E"/>
    <property type="match status" value="1"/>
</dbReference>
<dbReference type="Pfam" id="PF09440">
    <property type="entry name" value="eIF3_N"/>
    <property type="match status" value="1"/>
</dbReference>
<dbReference type="Pfam" id="PF21357">
    <property type="entry name" value="EIF3E_C"/>
    <property type="match status" value="1"/>
</dbReference>
<dbReference type="Pfam" id="PF01399">
    <property type="entry name" value="PCI"/>
    <property type="match status" value="1"/>
</dbReference>
<dbReference type="PIRSF" id="PIRSF016255">
    <property type="entry name" value="eIF3e_su6"/>
    <property type="match status" value="1"/>
</dbReference>
<dbReference type="SMART" id="SM01186">
    <property type="entry name" value="eIF3_N"/>
    <property type="match status" value="1"/>
</dbReference>
<dbReference type="SMART" id="SM00088">
    <property type="entry name" value="PINT"/>
    <property type="match status" value="1"/>
</dbReference>
<dbReference type="SUPFAM" id="SSF46785">
    <property type="entry name" value="Winged helix' DNA-binding domain"/>
    <property type="match status" value="1"/>
</dbReference>
<dbReference type="PROSITE" id="PS50250">
    <property type="entry name" value="PCI"/>
    <property type="match status" value="1"/>
</dbReference>
<protein>
    <recommendedName>
        <fullName evidence="1">Eukaryotic translation initiation factor 3 subunit E</fullName>
        <shortName evidence="1">eIF3e</shortName>
    </recommendedName>
</protein>
<proteinExistence type="inferred from homology"/>
<name>EIF3E_ASPOR</name>
<feature type="chain" id="PRO_0000365982" description="Eukaryotic translation initiation factor 3 subunit E">
    <location>
        <begin position="1"/>
        <end position="451"/>
    </location>
</feature>
<feature type="domain" description="PCI" evidence="2">
    <location>
        <begin position="256"/>
        <end position="425"/>
    </location>
</feature>
<comment type="function">
    <text evidence="1">Component of the eukaryotic translation initiation factor 3 (eIF-3) complex, which is involved in protein synthesis of a specialized repertoire of mRNAs and, together with other initiation factors, stimulates binding of mRNA and methionyl-tRNAi to the 40S ribosome. The eIF-3 complex specifically targets and initiates translation of a subset of mRNAs involved in cell proliferation.</text>
</comment>
<comment type="subunit">
    <text evidence="1">Component of the eukaryotic translation initiation factor 3 (eIF-3) complex.</text>
</comment>
<comment type="subcellular location">
    <subcellularLocation>
        <location evidence="1">Cytoplasm</location>
    </subcellularLocation>
</comment>
<comment type="similarity">
    <text evidence="1">Belongs to the eIF-3 subunit E family.</text>
</comment>